<keyword id="KW-0256">Endoplasmic reticulum</keyword>
<keyword id="KW-0472">Membrane</keyword>
<keyword id="KW-1185">Reference proteome</keyword>
<keyword id="KW-0812">Transmembrane</keyword>
<keyword id="KW-1133">Transmembrane helix</keyword>
<gene>
    <name type="primary">ost5</name>
    <name type="ORF">SPCC18.19c</name>
</gene>
<proteinExistence type="inferred from homology"/>
<protein>
    <recommendedName>
        <fullName>Dolichyl-diphosphooligosaccharide--protein glycosyltransferase subunit ost5</fullName>
        <shortName>Oligosaccharyl transferase subunit ost5</shortName>
    </recommendedName>
    <alternativeName>
        <fullName>Oligosaccharyl transferase subunit zeta</fullName>
    </alternativeName>
</protein>
<organism>
    <name type="scientific">Schizosaccharomyces pombe (strain 972 / ATCC 24843)</name>
    <name type="common">Fission yeast</name>
    <dbReference type="NCBI Taxonomy" id="284812"/>
    <lineage>
        <taxon>Eukaryota</taxon>
        <taxon>Fungi</taxon>
        <taxon>Dikarya</taxon>
        <taxon>Ascomycota</taxon>
        <taxon>Taphrinomycotina</taxon>
        <taxon>Schizosaccharomycetes</taxon>
        <taxon>Schizosaccharomycetales</taxon>
        <taxon>Schizosaccharomycetaceae</taxon>
        <taxon>Schizosaccharomyces</taxon>
    </lineage>
</organism>
<sequence>MSLNELIVAALKLFFYNKEQKSDCIFFCQVQIVIQISSSMFSLVIRRIHIRKLWYITVFTINASMFSGFFNNPSLLTPNENLLFQVGLHYSFAV</sequence>
<feature type="chain" id="PRO_0000416669" description="Dolichyl-diphosphooligosaccharide--protein glycosyltransferase subunit ost5">
    <location>
        <begin position="1"/>
        <end position="94"/>
    </location>
</feature>
<feature type="transmembrane region" description="Helical" evidence="3">
    <location>
        <begin position="24"/>
        <end position="45"/>
    </location>
</feature>
<feature type="transmembrane region" description="Helical" evidence="3">
    <location>
        <begin position="53"/>
        <end position="70"/>
    </location>
</feature>
<comment type="function">
    <text evidence="2">Subunit of the oligosaccharyl transferase (OST) complex that catalyzes the initial transfer of a defined glycan (Glc(3)Man(9)GlcNAc(2) in eukaryotes) from the lipid carrier dolichol-pyrophosphate to an asparagine residue within an Asn-X-Ser/Thr consensus motif in nascent polypeptide chains, the first step in protein N-glycosylation. N-glycosylation occurs cotranslationally and the complex associates with the Sec61 complex at the channel-forming translocon complex that mediates protein translocation across the endoplasmic reticulum (ER). All subunits are required for a maximal enzyme activity.</text>
</comment>
<comment type="pathway">
    <text>Protein modification; protein glycosylation.</text>
</comment>
<comment type="subunit">
    <text evidence="2">Component of the oligosaccharyltransferase (OST) complex.</text>
</comment>
<comment type="subcellular location">
    <subcellularLocation>
        <location evidence="1">Endoplasmic reticulum membrane</location>
        <topology evidence="1">Multi-pass membrane protein</topology>
    </subcellularLocation>
</comment>
<comment type="similarity">
    <text evidence="4">Belongs to the OST5 family.</text>
</comment>
<reference key="1">
    <citation type="journal article" date="2002" name="Nature">
        <title>The genome sequence of Schizosaccharomyces pombe.</title>
        <authorList>
            <person name="Wood V."/>
            <person name="Gwilliam R."/>
            <person name="Rajandream M.A."/>
            <person name="Lyne M.H."/>
            <person name="Lyne R."/>
            <person name="Stewart A."/>
            <person name="Sgouros J.G."/>
            <person name="Peat N."/>
            <person name="Hayles J."/>
            <person name="Baker S.G."/>
            <person name="Basham D."/>
            <person name="Bowman S."/>
            <person name="Brooks K."/>
            <person name="Brown D."/>
            <person name="Brown S."/>
            <person name="Chillingworth T."/>
            <person name="Churcher C.M."/>
            <person name="Collins M."/>
            <person name="Connor R."/>
            <person name="Cronin A."/>
            <person name="Davis P."/>
            <person name="Feltwell T."/>
            <person name="Fraser A."/>
            <person name="Gentles S."/>
            <person name="Goble A."/>
            <person name="Hamlin N."/>
            <person name="Harris D.E."/>
            <person name="Hidalgo J."/>
            <person name="Hodgson G."/>
            <person name="Holroyd S."/>
            <person name="Hornsby T."/>
            <person name="Howarth S."/>
            <person name="Huckle E.J."/>
            <person name="Hunt S."/>
            <person name="Jagels K."/>
            <person name="James K.D."/>
            <person name="Jones L."/>
            <person name="Jones M."/>
            <person name="Leather S."/>
            <person name="McDonald S."/>
            <person name="McLean J."/>
            <person name="Mooney P."/>
            <person name="Moule S."/>
            <person name="Mungall K.L."/>
            <person name="Murphy L.D."/>
            <person name="Niblett D."/>
            <person name="Odell C."/>
            <person name="Oliver K."/>
            <person name="O'Neil S."/>
            <person name="Pearson D."/>
            <person name="Quail M.A."/>
            <person name="Rabbinowitsch E."/>
            <person name="Rutherford K.M."/>
            <person name="Rutter S."/>
            <person name="Saunders D."/>
            <person name="Seeger K."/>
            <person name="Sharp S."/>
            <person name="Skelton J."/>
            <person name="Simmonds M.N."/>
            <person name="Squares R."/>
            <person name="Squares S."/>
            <person name="Stevens K."/>
            <person name="Taylor K."/>
            <person name="Taylor R.G."/>
            <person name="Tivey A."/>
            <person name="Walsh S.V."/>
            <person name="Warren T."/>
            <person name="Whitehead S."/>
            <person name="Woodward J.R."/>
            <person name="Volckaert G."/>
            <person name="Aert R."/>
            <person name="Robben J."/>
            <person name="Grymonprez B."/>
            <person name="Weltjens I."/>
            <person name="Vanstreels E."/>
            <person name="Rieger M."/>
            <person name="Schaefer M."/>
            <person name="Mueller-Auer S."/>
            <person name="Gabel C."/>
            <person name="Fuchs M."/>
            <person name="Duesterhoeft A."/>
            <person name="Fritzc C."/>
            <person name="Holzer E."/>
            <person name="Moestl D."/>
            <person name="Hilbert H."/>
            <person name="Borzym K."/>
            <person name="Langer I."/>
            <person name="Beck A."/>
            <person name="Lehrach H."/>
            <person name="Reinhardt R."/>
            <person name="Pohl T.M."/>
            <person name="Eger P."/>
            <person name="Zimmermann W."/>
            <person name="Wedler H."/>
            <person name="Wambutt R."/>
            <person name="Purnelle B."/>
            <person name="Goffeau A."/>
            <person name="Cadieu E."/>
            <person name="Dreano S."/>
            <person name="Gloux S."/>
            <person name="Lelaure V."/>
            <person name="Mottier S."/>
            <person name="Galibert F."/>
            <person name="Aves S.J."/>
            <person name="Xiang Z."/>
            <person name="Hunt C."/>
            <person name="Moore K."/>
            <person name="Hurst S.M."/>
            <person name="Lucas M."/>
            <person name="Rochet M."/>
            <person name="Gaillardin C."/>
            <person name="Tallada V.A."/>
            <person name="Garzon A."/>
            <person name="Thode G."/>
            <person name="Daga R.R."/>
            <person name="Cruzado L."/>
            <person name="Jimenez J."/>
            <person name="Sanchez M."/>
            <person name="del Rey F."/>
            <person name="Benito J."/>
            <person name="Dominguez A."/>
            <person name="Revuelta J.L."/>
            <person name="Moreno S."/>
            <person name="Armstrong J."/>
            <person name="Forsburg S.L."/>
            <person name="Cerutti L."/>
            <person name="Lowe T."/>
            <person name="McCombie W.R."/>
            <person name="Paulsen I."/>
            <person name="Potashkin J."/>
            <person name="Shpakovski G.V."/>
            <person name="Ussery D."/>
            <person name="Barrell B.G."/>
            <person name="Nurse P."/>
        </authorList>
    </citation>
    <scope>NUCLEOTIDE SEQUENCE [LARGE SCALE GENOMIC DNA]</scope>
    <source>
        <strain>972 / ATCC 24843</strain>
    </source>
</reference>
<reference key="2">
    <citation type="unpublished observations" date="2010-02">
        <authorList>
            <consortium name="Schizosaccharomyces pombe GeneDB"/>
        </authorList>
    </citation>
    <scope>REVISION OF GENE MODEL</scope>
</reference>
<evidence type="ECO:0000250" key="1"/>
<evidence type="ECO:0000250" key="2">
    <source>
        <dbReference type="UniProtKB" id="Q92316"/>
    </source>
</evidence>
<evidence type="ECO:0000255" key="3"/>
<evidence type="ECO:0000305" key="4"/>
<name>OST5_SCHPO</name>
<dbReference type="EMBL" id="CU329672">
    <property type="protein sequence ID" value="CCD31399.1"/>
    <property type="molecule type" value="Genomic_DNA"/>
</dbReference>
<dbReference type="RefSeq" id="XP_004001754.1">
    <property type="nucleotide sequence ID" value="XM_004001705.1"/>
</dbReference>
<dbReference type="ComplexPortal" id="CPX-10061">
    <property type="entry name" value="Oligosaccharyltransferase complex"/>
</dbReference>
<dbReference type="STRING" id="284812.G2TRU0"/>
<dbReference type="PaxDb" id="4896-SPCC18.19c.1"/>
<dbReference type="EnsemblFungi" id="SPCC18.19c.1">
    <property type="protein sequence ID" value="SPCC18.19c.1:pep"/>
    <property type="gene ID" value="SPCC18.19c"/>
</dbReference>
<dbReference type="PomBase" id="SPCC18.19c">
    <property type="gene designation" value="ost5"/>
</dbReference>
<dbReference type="VEuPathDB" id="FungiDB:SPCC18.19c"/>
<dbReference type="HOGENOM" id="CLU_2387438_0_0_1"/>
<dbReference type="InParanoid" id="G2TRU0"/>
<dbReference type="UniPathway" id="UPA00378"/>
<dbReference type="PRO" id="PR:G2TRU0"/>
<dbReference type="Proteomes" id="UP000002485">
    <property type="component" value="Chromosome III"/>
</dbReference>
<dbReference type="GO" id="GO:0008250">
    <property type="term" value="C:oligosaccharyltransferase complex"/>
    <property type="evidence" value="ECO:0000266"/>
    <property type="project" value="PomBase"/>
</dbReference>
<dbReference type="GO" id="GO:0006486">
    <property type="term" value="P:protein glycosylation"/>
    <property type="evidence" value="ECO:0007669"/>
    <property type="project" value="UniProtKB-UniPathway"/>
</dbReference>
<accession>G2TRU0</accession>